<name>MYO1_PICGU</name>
<organism>
    <name type="scientific">Meyerozyma guilliermondii (strain ATCC 6260 / CBS 566 / DSM 6381 / JCM 1539 / NBRC 10279 / NRRL Y-324)</name>
    <name type="common">Yeast</name>
    <name type="synonym">Candida guilliermondii</name>
    <dbReference type="NCBI Taxonomy" id="294746"/>
    <lineage>
        <taxon>Eukaryota</taxon>
        <taxon>Fungi</taxon>
        <taxon>Dikarya</taxon>
        <taxon>Ascomycota</taxon>
        <taxon>Saccharomycotina</taxon>
        <taxon>Pichiomycetes</taxon>
        <taxon>Debaryomycetaceae</taxon>
        <taxon>Meyerozyma</taxon>
    </lineage>
</organism>
<dbReference type="EMBL" id="CH408158">
    <property type="protein sequence ID" value="EDK39673.2"/>
    <property type="status" value="ALT_FRAME"/>
    <property type="molecule type" value="Genomic_DNA"/>
</dbReference>
<dbReference type="RefSeq" id="XP_001484390.1">
    <property type="nucleotide sequence ID" value="XM_001484340.1"/>
</dbReference>
<dbReference type="SMR" id="A5DKH0"/>
<dbReference type="FunCoup" id="A5DKH0">
    <property type="interactions" value="356"/>
</dbReference>
<dbReference type="STRING" id="294746.A5DKH0"/>
<dbReference type="GeneID" id="5126161"/>
<dbReference type="KEGG" id="pgu:PGUG_03771"/>
<dbReference type="eggNOG" id="KOG0162">
    <property type="taxonomic scope" value="Eukaryota"/>
</dbReference>
<dbReference type="HOGENOM" id="CLU_000192_7_6_1"/>
<dbReference type="InParanoid" id="A5DKH0"/>
<dbReference type="OrthoDB" id="6108017at2759"/>
<dbReference type="Proteomes" id="UP000001997">
    <property type="component" value="Unassembled WGS sequence"/>
</dbReference>
<dbReference type="GO" id="GO:0030479">
    <property type="term" value="C:actin cortical patch"/>
    <property type="evidence" value="ECO:0007669"/>
    <property type="project" value="UniProtKB-SubCell"/>
</dbReference>
<dbReference type="GO" id="GO:0051286">
    <property type="term" value="C:cell tip"/>
    <property type="evidence" value="ECO:0007669"/>
    <property type="project" value="TreeGrafter"/>
</dbReference>
<dbReference type="GO" id="GO:0016459">
    <property type="term" value="C:myosin complex"/>
    <property type="evidence" value="ECO:0007669"/>
    <property type="project" value="UniProtKB-KW"/>
</dbReference>
<dbReference type="GO" id="GO:0005886">
    <property type="term" value="C:plasma membrane"/>
    <property type="evidence" value="ECO:0007669"/>
    <property type="project" value="TreeGrafter"/>
</dbReference>
<dbReference type="GO" id="GO:0051015">
    <property type="term" value="F:actin filament binding"/>
    <property type="evidence" value="ECO:0007669"/>
    <property type="project" value="TreeGrafter"/>
</dbReference>
<dbReference type="GO" id="GO:0005524">
    <property type="term" value="F:ATP binding"/>
    <property type="evidence" value="ECO:0007669"/>
    <property type="project" value="UniProtKB-KW"/>
</dbReference>
<dbReference type="GO" id="GO:0016787">
    <property type="term" value="F:hydrolase activity"/>
    <property type="evidence" value="ECO:0007669"/>
    <property type="project" value="UniProtKB-KW"/>
</dbReference>
<dbReference type="GO" id="GO:0000146">
    <property type="term" value="F:microfilament motor activity"/>
    <property type="evidence" value="ECO:0007669"/>
    <property type="project" value="TreeGrafter"/>
</dbReference>
<dbReference type="GO" id="GO:0051666">
    <property type="term" value="P:actin cortical patch localization"/>
    <property type="evidence" value="ECO:0007669"/>
    <property type="project" value="TreeGrafter"/>
</dbReference>
<dbReference type="GO" id="GO:0007015">
    <property type="term" value="P:actin filament organization"/>
    <property type="evidence" value="ECO:0007669"/>
    <property type="project" value="TreeGrafter"/>
</dbReference>
<dbReference type="GO" id="GO:0006897">
    <property type="term" value="P:endocytosis"/>
    <property type="evidence" value="ECO:0007669"/>
    <property type="project" value="TreeGrafter"/>
</dbReference>
<dbReference type="CDD" id="cd01378">
    <property type="entry name" value="MYSc_Myo1"/>
    <property type="match status" value="1"/>
</dbReference>
<dbReference type="CDD" id="cd11858">
    <property type="entry name" value="SH3_Myosin-I_fungi"/>
    <property type="match status" value="1"/>
</dbReference>
<dbReference type="FunFam" id="1.10.10.820:FF:000001">
    <property type="entry name" value="Myosin heavy chain"/>
    <property type="match status" value="1"/>
</dbReference>
<dbReference type="FunFam" id="1.20.120.720:FF:000015">
    <property type="entry name" value="Myosin I"/>
    <property type="match status" value="1"/>
</dbReference>
<dbReference type="FunFam" id="1.20.5.4820:FF:000004">
    <property type="entry name" value="Myosin IE"/>
    <property type="match status" value="1"/>
</dbReference>
<dbReference type="FunFam" id="1.20.58.530:FF:000007">
    <property type="entry name" value="Myosin IE"/>
    <property type="match status" value="1"/>
</dbReference>
<dbReference type="Gene3D" id="1.10.10.820">
    <property type="match status" value="1"/>
</dbReference>
<dbReference type="Gene3D" id="1.20.5.4820">
    <property type="match status" value="1"/>
</dbReference>
<dbReference type="Gene3D" id="1.20.58.530">
    <property type="match status" value="1"/>
</dbReference>
<dbReference type="Gene3D" id="3.40.850.10">
    <property type="entry name" value="Kinesin motor domain"/>
    <property type="match status" value="1"/>
</dbReference>
<dbReference type="Gene3D" id="1.20.120.720">
    <property type="entry name" value="Myosin VI head, motor domain, U50 subdomain"/>
    <property type="match status" value="1"/>
</dbReference>
<dbReference type="Gene3D" id="2.30.30.40">
    <property type="entry name" value="SH3 Domains"/>
    <property type="match status" value="1"/>
</dbReference>
<dbReference type="InterPro" id="IPR035535">
    <property type="entry name" value="Fungal_myosin-I_SH3"/>
</dbReference>
<dbReference type="InterPro" id="IPR036961">
    <property type="entry name" value="Kinesin_motor_dom_sf"/>
</dbReference>
<dbReference type="InterPro" id="IPR001609">
    <property type="entry name" value="Myosin_head_motor_dom-like"/>
</dbReference>
<dbReference type="InterPro" id="IPR010926">
    <property type="entry name" value="Myosin_TH1"/>
</dbReference>
<dbReference type="InterPro" id="IPR036072">
    <property type="entry name" value="MYSc_Myo1"/>
</dbReference>
<dbReference type="InterPro" id="IPR027417">
    <property type="entry name" value="P-loop_NTPase"/>
</dbReference>
<dbReference type="InterPro" id="IPR036028">
    <property type="entry name" value="SH3-like_dom_sf"/>
</dbReference>
<dbReference type="InterPro" id="IPR001452">
    <property type="entry name" value="SH3_domain"/>
</dbReference>
<dbReference type="PANTHER" id="PTHR13140">
    <property type="entry name" value="MYOSIN"/>
    <property type="match status" value="1"/>
</dbReference>
<dbReference type="PANTHER" id="PTHR13140:SF837">
    <property type="entry name" value="MYOSIN-3-RELATED"/>
    <property type="match status" value="1"/>
</dbReference>
<dbReference type="Pfam" id="PF00063">
    <property type="entry name" value="Myosin_head"/>
    <property type="match status" value="1"/>
</dbReference>
<dbReference type="Pfam" id="PF06017">
    <property type="entry name" value="Myosin_TH1"/>
    <property type="match status" value="1"/>
</dbReference>
<dbReference type="Pfam" id="PF00018">
    <property type="entry name" value="SH3_1"/>
    <property type="match status" value="1"/>
</dbReference>
<dbReference type="PRINTS" id="PR00193">
    <property type="entry name" value="MYOSINHEAVY"/>
</dbReference>
<dbReference type="SMART" id="SM00242">
    <property type="entry name" value="MYSc"/>
    <property type="match status" value="1"/>
</dbReference>
<dbReference type="SMART" id="SM00326">
    <property type="entry name" value="SH3"/>
    <property type="match status" value="1"/>
</dbReference>
<dbReference type="SUPFAM" id="SSF52540">
    <property type="entry name" value="P-loop containing nucleoside triphosphate hydrolases"/>
    <property type="match status" value="1"/>
</dbReference>
<dbReference type="SUPFAM" id="SSF50044">
    <property type="entry name" value="SH3-domain"/>
    <property type="match status" value="1"/>
</dbReference>
<dbReference type="PROSITE" id="PS51456">
    <property type="entry name" value="MYOSIN_MOTOR"/>
    <property type="match status" value="1"/>
</dbReference>
<dbReference type="PROSITE" id="PS50002">
    <property type="entry name" value="SH3"/>
    <property type="match status" value="1"/>
</dbReference>
<dbReference type="PROSITE" id="PS51757">
    <property type="entry name" value="TH1"/>
    <property type="match status" value="1"/>
</dbReference>
<gene>
    <name type="primary">MYO1</name>
    <name type="ORF">PGUG_03771</name>
</gene>
<sequence>MAIVKRGARSKAKQEAPAKSGIKKAEFDLHKKKEVGVSDLTLLSKISDDSINDNLHKRFMNNTIYTYIGHVLISVNPFQDLGIYTKEYLNMYKGKNRLEVPPHVFAIAESMYYHLKSYGESQCVIISGESGAGKTEAAKQIMQYIANVSVDDKVSTTSEITQIKDMVLATNPLLESFGCAKTLRNNNSSRHGKYLEIYFNPSNYQPVAAHITNYLLEKQRVVSQITNERNFHIFYQLTKSCPPEYKQSFGLQGPETYVYTSAAKCIDVEGINDGKDFAETLQAMNTIGLSKAEQDNIFRSLASILWIGNISFVENEDGNAAIRDDTVTTFVAYLLEVDANVLKKSILERVIETSHGMRRGSTYHVPLNIVQATASRDALAKGIYNYLFDWIVERVNISLRGRAEAMEKKTIGILDIYGFEIFEHNSFEQICINYVNEKLQQIFIQLTLKAEQDEYVQEQIKWTPIDYFNNKVVCDLIEATRPQPGLFAALNDSIKTAHADSDAADQVFAQRLSMVGANNRHFEDRKGKFIIKHYAGDVVYDVAGMTDKNKDAMLRDLLEMLSTSQNTFVNSVLFPPDLLAVLTDKKKRPETASDKIKKSANLLVDTLSQCQPSYIRTIKPNQTKRPKEYDNAQVLHQVKYLGLKENVRIRRAGFAYRTTFDKFVQRFYLLSPKTGYAGDYIWNGDDISAVREILKSCHIPDTEFQMGTSKVFIKTPETLFAMEDMRDKYWHNMAARIQRAWRRYVKRKEDAARLIQNAWKVKKHGNQFEQLRDYGNGLLQGRKERRRMSMLGSRAFMGDYLGCNYSSGFGRFVLNQVGLNEHVVFSGKGEILLSKFGRSSKRLPRIFVLGRSSLYIIAENLVERRLQLSKEFVIPINSINYVGLSTFQDNWLAVSLHSPTPTTPDVLINLDFKTELVTHLKKLNPGLTIKIGPTIEYQKKPGKFHTVKFVRSDVSTIPIHGDVYKSGTVSVRPGLSPDSQNPKRPRATSSKVDYSKYYNRGGRLAPARTVPPAHPTSQQRTPVAPPSHATQQQPSYPTPVAPVHQQPNNHVRKVPPPAPSLNNNHQEAVTAATAAMNHVNIQQPATVVQNHNSNPTAPSRPAKKAAPAPPVKKTAPPPPPSLSAAKPKWPTFKANYDYDGSVSGSMALSANDIVYITQNNGQWSLAKSLDESKEGWVPTAYISECPPPSNLGGSKSPPPPPPPSATTRTVPEQGGNAAAAASTQQEGGLSNGLAGALLAKKNEETNLAGSIADALKKRSATRDSDDEEEDDDDDW</sequence>
<keyword id="KW-0009">Actin-binding</keyword>
<keyword id="KW-0067">ATP-binding</keyword>
<keyword id="KW-0963">Cytoplasm</keyword>
<keyword id="KW-0206">Cytoskeleton</keyword>
<keyword id="KW-0378">Hydrolase</keyword>
<keyword id="KW-0505">Motor protein</keyword>
<keyword id="KW-0518">Myosin</keyword>
<keyword id="KW-0547">Nucleotide-binding</keyword>
<keyword id="KW-0597">Phosphoprotein</keyword>
<keyword id="KW-1185">Reference proteome</keyword>
<keyword id="KW-0677">Repeat</keyword>
<keyword id="KW-0728">SH3 domain</keyword>
<accession>A5DKH0</accession>
<proteinExistence type="inferred from homology"/>
<evidence type="ECO:0000250" key="1"/>
<evidence type="ECO:0000255" key="2"/>
<evidence type="ECO:0000255" key="3">
    <source>
        <dbReference type="PROSITE-ProRule" id="PRU00192"/>
    </source>
</evidence>
<evidence type="ECO:0000255" key="4">
    <source>
        <dbReference type="PROSITE-ProRule" id="PRU00782"/>
    </source>
</evidence>
<evidence type="ECO:0000255" key="5">
    <source>
        <dbReference type="PROSITE-ProRule" id="PRU01093"/>
    </source>
</evidence>
<evidence type="ECO:0000256" key="6">
    <source>
        <dbReference type="SAM" id="MobiDB-lite"/>
    </source>
</evidence>
<evidence type="ECO:0000305" key="7"/>
<feature type="chain" id="PRO_0000338559" description="Myosin-1">
    <location>
        <begin position="1"/>
        <end position="1275"/>
    </location>
</feature>
<feature type="domain" description="Myosin motor" evidence="4">
    <location>
        <begin position="35"/>
        <end position="727"/>
    </location>
</feature>
<feature type="domain" description="IQ 1">
    <location>
        <begin position="731"/>
        <end position="751"/>
    </location>
</feature>
<feature type="domain" description="IQ 2">
    <location>
        <begin position="752"/>
        <end position="777"/>
    </location>
</feature>
<feature type="domain" description="TH1" evidence="5">
    <location>
        <begin position="785"/>
        <end position="974"/>
    </location>
</feature>
<feature type="domain" description="SH3" evidence="3">
    <location>
        <begin position="1127"/>
        <end position="1187"/>
    </location>
</feature>
<feature type="region of interest" description="Actin-binding" evidence="1">
    <location>
        <begin position="410"/>
        <end position="493"/>
    </location>
</feature>
<feature type="region of interest" description="Disordered" evidence="6">
    <location>
        <begin position="966"/>
        <end position="1064"/>
    </location>
</feature>
<feature type="region of interest" description="Disordered" evidence="6">
    <location>
        <begin position="1089"/>
        <end position="1128"/>
    </location>
</feature>
<feature type="region of interest" description="Disordered" evidence="6">
    <location>
        <begin position="1183"/>
        <end position="1230"/>
    </location>
</feature>
<feature type="region of interest" description="Disordered" evidence="6">
    <location>
        <begin position="1251"/>
        <end position="1275"/>
    </location>
</feature>
<feature type="compositionally biased region" description="Polar residues" evidence="6">
    <location>
        <begin position="977"/>
        <end position="992"/>
    </location>
</feature>
<feature type="compositionally biased region" description="Low complexity" evidence="6">
    <location>
        <begin position="1095"/>
        <end position="1106"/>
    </location>
</feature>
<feature type="compositionally biased region" description="Pro residues" evidence="6">
    <location>
        <begin position="1107"/>
        <end position="1121"/>
    </location>
</feature>
<feature type="compositionally biased region" description="Basic and acidic residues" evidence="6">
    <location>
        <begin position="1254"/>
        <end position="1263"/>
    </location>
</feature>
<feature type="compositionally biased region" description="Acidic residues" evidence="6">
    <location>
        <begin position="1264"/>
        <end position="1275"/>
    </location>
</feature>
<feature type="binding site" evidence="2">
    <location>
        <begin position="128"/>
        <end position="135"/>
    </location>
    <ligand>
        <name>ATP</name>
        <dbReference type="ChEBI" id="CHEBI:30616"/>
    </ligand>
</feature>
<feature type="modified residue" description="Phosphoserine" evidence="1">
    <location>
        <position position="361"/>
    </location>
</feature>
<reference key="1">
    <citation type="journal article" date="2009" name="Nature">
        <title>Evolution of pathogenicity and sexual reproduction in eight Candida genomes.</title>
        <authorList>
            <person name="Butler G."/>
            <person name="Rasmussen M.D."/>
            <person name="Lin M.F."/>
            <person name="Santos M.A.S."/>
            <person name="Sakthikumar S."/>
            <person name="Munro C.A."/>
            <person name="Rheinbay E."/>
            <person name="Grabherr M."/>
            <person name="Forche A."/>
            <person name="Reedy J.L."/>
            <person name="Agrafioti I."/>
            <person name="Arnaud M.B."/>
            <person name="Bates S."/>
            <person name="Brown A.J.P."/>
            <person name="Brunke S."/>
            <person name="Costanzo M.C."/>
            <person name="Fitzpatrick D.A."/>
            <person name="de Groot P.W.J."/>
            <person name="Harris D."/>
            <person name="Hoyer L.L."/>
            <person name="Hube B."/>
            <person name="Klis F.M."/>
            <person name="Kodira C."/>
            <person name="Lennard N."/>
            <person name="Logue M.E."/>
            <person name="Martin R."/>
            <person name="Neiman A.M."/>
            <person name="Nikolaou E."/>
            <person name="Quail M.A."/>
            <person name="Quinn J."/>
            <person name="Santos M.C."/>
            <person name="Schmitzberger F.F."/>
            <person name="Sherlock G."/>
            <person name="Shah P."/>
            <person name="Silverstein K.A.T."/>
            <person name="Skrzypek M.S."/>
            <person name="Soll D."/>
            <person name="Staggs R."/>
            <person name="Stansfield I."/>
            <person name="Stumpf M.P.H."/>
            <person name="Sudbery P.E."/>
            <person name="Srikantha T."/>
            <person name="Zeng Q."/>
            <person name="Berman J."/>
            <person name="Berriman M."/>
            <person name="Heitman J."/>
            <person name="Gow N.A.R."/>
            <person name="Lorenz M.C."/>
            <person name="Birren B.W."/>
            <person name="Kellis M."/>
            <person name="Cuomo C.A."/>
        </authorList>
    </citation>
    <scope>NUCLEOTIDE SEQUENCE [LARGE SCALE GENOMIC DNA]</scope>
    <source>
        <strain>ATCC 6260 / CBS 566 / DSM 6381 / JCM 1539 / NBRC 10279 / NRRL Y-324</strain>
    </source>
</reference>
<comment type="function">
    <text evidence="1">Type-I myosin implicated in the organization of the actin cytoskeleton. Required for proper actin cytoskeleton polarization. At the cell cortex, assembles in patch-like structures together with proteins from the actin-polymerizing machinery and promotes actin assembly. Functions as actin nucleation-promoting factor (NPF) for the Arp2/3 complex (By similarity).</text>
</comment>
<comment type="subcellular location">
    <subcellularLocation>
        <location evidence="1">Cytoplasm</location>
        <location evidence="1">Cytoskeleton</location>
        <location evidence="1">Actin patch</location>
    </subcellularLocation>
</comment>
<comment type="domain">
    <text evidence="1">The myosin motor domain displays actin-stimulated ATPase activity and generates a mechanochemical force.</text>
</comment>
<comment type="domain">
    <text evidence="1">The tail domain participates in molecular interactions that specify the role of the motor domain (By similarity). It is composed of several tail homology (TH) domains, namely a putative phospholipid-binding myosin tail domain (also named TH1), an Ala- and Pro-rich domain (TH2), followed by an SH3 domain and a C-terminal acidic domain (TH3).</text>
</comment>
<comment type="PTM">
    <text evidence="1">Phosphorylation of the TEDS site (Ser-361) is required for the polarization of the actin cytoskeleton. Phosphorylation probably activates the myosin-I ATPase activity (By similarity).</text>
</comment>
<comment type="similarity">
    <text evidence="7">Belongs to the TRAFAC class myosin-kinesin ATPase superfamily. Myosin family.</text>
</comment>
<comment type="sequence caution" evidence="7">
    <conflict type="frameshift">
        <sequence resource="EMBL-CDS" id="EDK39673"/>
    </conflict>
</comment>
<protein>
    <recommendedName>
        <fullName>Myosin-1</fullName>
    </recommendedName>
    <alternativeName>
        <fullName>Class I unconventional myosin</fullName>
    </alternativeName>
    <alternativeName>
        <fullName>Type I myosin</fullName>
    </alternativeName>
</protein>